<protein>
    <recommendedName>
        <fullName>Tripartite motif-containing 55</fullName>
        <ecNumber evidence="1">2.3.2.27</ecNumber>
    </recommendedName>
    <alternativeName>
        <fullName>Muscle-specific RING finger protein 2</fullName>
        <shortName>MuRF-2</shortName>
        <shortName>MuRF2</shortName>
    </alternativeName>
</protein>
<evidence type="ECO:0000250" key="1">
    <source>
        <dbReference type="UniProtKB" id="Q9BYV6"/>
    </source>
</evidence>
<evidence type="ECO:0000255" key="2">
    <source>
        <dbReference type="PROSITE-ProRule" id="PRU00024"/>
    </source>
</evidence>
<evidence type="ECO:0000255" key="3">
    <source>
        <dbReference type="PROSITE-ProRule" id="PRU00175"/>
    </source>
</evidence>
<evidence type="ECO:0000255" key="4">
    <source>
        <dbReference type="PROSITE-ProRule" id="PRU00586"/>
    </source>
</evidence>
<evidence type="ECO:0000256" key="5">
    <source>
        <dbReference type="SAM" id="MobiDB-lite"/>
    </source>
</evidence>
<evidence type="ECO:0000269" key="6">
    <source>
    </source>
</evidence>
<evidence type="ECO:0000269" key="7">
    <source>
    </source>
</evidence>
<evidence type="ECO:0000269" key="8">
    <source>
    </source>
</evidence>
<evidence type="ECO:0000269" key="9">
    <source>
    </source>
</evidence>
<evidence type="ECO:0007744" key="10">
    <source>
    </source>
</evidence>
<evidence type="ECO:0007744" key="11">
    <source>
    </source>
</evidence>
<keyword id="KW-0175">Coiled coil</keyword>
<keyword id="KW-0963">Cytoplasm</keyword>
<keyword id="KW-0479">Metal-binding</keyword>
<keyword id="KW-0514">Muscle protein</keyword>
<keyword id="KW-0539">Nucleus</keyword>
<keyword id="KW-1185">Reference proteome</keyword>
<keyword id="KW-0808">Transferase</keyword>
<keyword id="KW-0862">Zinc</keyword>
<keyword id="KW-0863">Zinc-finger</keyword>
<accession>G3X8Y1</accession>
<accession>Q8C6Y1</accession>
<organism>
    <name type="scientific">Mus musculus</name>
    <name type="common">Mouse</name>
    <dbReference type="NCBI Taxonomy" id="10090"/>
    <lineage>
        <taxon>Eukaryota</taxon>
        <taxon>Metazoa</taxon>
        <taxon>Chordata</taxon>
        <taxon>Craniata</taxon>
        <taxon>Vertebrata</taxon>
        <taxon>Euteleostomi</taxon>
        <taxon>Mammalia</taxon>
        <taxon>Eutheria</taxon>
        <taxon>Euarchontoglires</taxon>
        <taxon>Glires</taxon>
        <taxon>Rodentia</taxon>
        <taxon>Myomorpha</taxon>
        <taxon>Muroidea</taxon>
        <taxon>Muridae</taxon>
        <taxon>Murinae</taxon>
        <taxon>Mus</taxon>
        <taxon>Mus</taxon>
    </lineage>
</organism>
<sequence>MSTSLNYKSFSKEQQTMDNLEKQLICPICLEMFTKPVVILPCQHNLCRKCASDIFQASNPYLPTRGGTTVASGGRFRCPSCRHEVVLDRHGVYGLQRNLLVENIIDIYKQESTRPEKKLDQPMCEEHEEERINIYCLNCEVPTCSLCKVFGAHKDCQVAPLTHVFQRQKSELSDGIAVLVGSNDRVQGVISQLEDTCKTIEECCRKQKQDLCEKFDHLYGILEERKTEMTQAITRTQEEKLEHVRTLIRKYSDHLENVSKLVESGIQFMDEPEMAVFLQNAKTLLQKIVEASKAFQMEKLEQGYEIMSNFTVNLNREEKIIREIDFSREEEEEEDAGEIDEEGEGEDAVEVEEAENVQIASSGEEESLEKAAEPSQLPAELQVAPEPLPASSPEPFSSMPPAADVLVTQGEVVPIGSQQTTQSETSGPSAAETADPLFYPSWYKGQSRKTSSNPPCTHGSEGLGQIGPLGIEDSSVQSAEVAEAATNEQAAVSGKESSSTAATSQIGFEAPSPQGQSAALGSGGGADPEPARHVFSFSWLNSLNE</sequence>
<dbReference type="EC" id="2.3.2.27" evidence="1"/>
<dbReference type="EMBL" id="AC141209">
    <property type="status" value="NOT_ANNOTATED_CDS"/>
    <property type="molecule type" value="Genomic_DNA"/>
</dbReference>
<dbReference type="EMBL" id="AK052918">
    <property type="protein sequence ID" value="BAC35202.1"/>
    <property type="molecule type" value="mRNA"/>
</dbReference>
<dbReference type="CCDS" id="CCDS38399.1"/>
<dbReference type="RefSeq" id="NP_001074750.1">
    <property type="nucleotide sequence ID" value="NM_001081281.2"/>
</dbReference>
<dbReference type="SMR" id="G3X8Y1"/>
<dbReference type="FunCoup" id="G3X8Y1">
    <property type="interactions" value="542"/>
</dbReference>
<dbReference type="STRING" id="10090.ENSMUSP00000029139"/>
<dbReference type="iPTMnet" id="G3X8Y1"/>
<dbReference type="PhosphoSitePlus" id="G3X8Y1"/>
<dbReference type="PaxDb" id="10090-ENSMUSP00000029139"/>
<dbReference type="ProteomicsDB" id="336819"/>
<dbReference type="Antibodypedia" id="24808">
    <property type="antibodies" value="174 antibodies from 28 providers"/>
</dbReference>
<dbReference type="DNASU" id="381485"/>
<dbReference type="Ensembl" id="ENSMUST00000029139.9">
    <property type="protein sequence ID" value="ENSMUSP00000029139.8"/>
    <property type="gene ID" value="ENSMUSG00000060913.8"/>
</dbReference>
<dbReference type="GeneID" id="381485"/>
<dbReference type="KEGG" id="mmu:381485"/>
<dbReference type="UCSC" id="uc008orw.1">
    <property type="organism name" value="mouse"/>
</dbReference>
<dbReference type="AGR" id="MGI:3036269"/>
<dbReference type="CTD" id="84675"/>
<dbReference type="MGI" id="MGI:3036269">
    <property type="gene designation" value="Trim55"/>
</dbReference>
<dbReference type="VEuPathDB" id="HostDB:ENSMUSG00000060913"/>
<dbReference type="eggNOG" id="KOG2177">
    <property type="taxonomic scope" value="Eukaryota"/>
</dbReference>
<dbReference type="GeneTree" id="ENSGT00940000154004"/>
<dbReference type="HOGENOM" id="CLU_013137_5_3_1"/>
<dbReference type="InParanoid" id="G3X8Y1"/>
<dbReference type="OMA" id="CDIHEDE"/>
<dbReference type="OrthoDB" id="4788989at2759"/>
<dbReference type="PhylomeDB" id="G3X8Y1"/>
<dbReference type="TreeFam" id="TF331669"/>
<dbReference type="BioGRID-ORCS" id="381485">
    <property type="hits" value="3 hits in 77 CRISPR screens"/>
</dbReference>
<dbReference type="ChiTaRS" id="Trim55">
    <property type="organism name" value="mouse"/>
</dbReference>
<dbReference type="Proteomes" id="UP000000589">
    <property type="component" value="Chromosome 3"/>
</dbReference>
<dbReference type="RNAct" id="G3X8Y1">
    <property type="molecule type" value="protein"/>
</dbReference>
<dbReference type="Bgee" id="ENSMUSG00000060913">
    <property type="expression patterns" value="Expressed in heart and 22 other cell types or tissues"/>
</dbReference>
<dbReference type="GO" id="GO:0005737">
    <property type="term" value="C:cytoplasm"/>
    <property type="evidence" value="ECO:0007669"/>
    <property type="project" value="UniProtKB-SubCell"/>
</dbReference>
<dbReference type="GO" id="GO:0005634">
    <property type="term" value="C:nucleus"/>
    <property type="evidence" value="ECO:0007669"/>
    <property type="project" value="UniProtKB-SubCell"/>
</dbReference>
<dbReference type="GO" id="GO:0042802">
    <property type="term" value="F:identical protein binding"/>
    <property type="evidence" value="ECO:0000250"/>
    <property type="project" value="MGI"/>
</dbReference>
<dbReference type="GO" id="GO:0030674">
    <property type="term" value="F:protein-macromolecule adaptor activity"/>
    <property type="evidence" value="ECO:0007669"/>
    <property type="project" value="Ensembl"/>
</dbReference>
<dbReference type="GO" id="GO:0061630">
    <property type="term" value="F:ubiquitin protein ligase activity"/>
    <property type="evidence" value="ECO:0007669"/>
    <property type="project" value="Ensembl"/>
</dbReference>
<dbReference type="GO" id="GO:0008270">
    <property type="term" value="F:zinc ion binding"/>
    <property type="evidence" value="ECO:0007669"/>
    <property type="project" value="UniProtKB-KW"/>
</dbReference>
<dbReference type="GO" id="GO:0050904">
    <property type="term" value="P:diapedesis"/>
    <property type="evidence" value="ECO:0000315"/>
    <property type="project" value="MGI"/>
</dbReference>
<dbReference type="GO" id="GO:0002523">
    <property type="term" value="P:leukocyte migration involved in inflammatory response"/>
    <property type="evidence" value="ECO:0000315"/>
    <property type="project" value="MGI"/>
</dbReference>
<dbReference type="GO" id="GO:1905517">
    <property type="term" value="P:macrophage migration"/>
    <property type="evidence" value="ECO:0000314"/>
    <property type="project" value="MGI"/>
</dbReference>
<dbReference type="GO" id="GO:1901224">
    <property type="term" value="P:positive regulation of non-canonical NF-kappaB signal transduction"/>
    <property type="evidence" value="ECO:0007669"/>
    <property type="project" value="Ensembl"/>
</dbReference>
<dbReference type="GO" id="GO:0070936">
    <property type="term" value="P:protein K48-linked ubiquitination"/>
    <property type="evidence" value="ECO:0007669"/>
    <property type="project" value="Ensembl"/>
</dbReference>
<dbReference type="CDD" id="cd19832">
    <property type="entry name" value="Bbox2_MuRF2_C-II"/>
    <property type="match status" value="1"/>
</dbReference>
<dbReference type="CDD" id="cd16760">
    <property type="entry name" value="RING-HC_MuRF2"/>
    <property type="match status" value="1"/>
</dbReference>
<dbReference type="FunFam" id="3.30.40.10:FF:000014">
    <property type="entry name" value="probable E3 ubiquitin-protein ligase MID2"/>
    <property type="match status" value="1"/>
</dbReference>
<dbReference type="FunFam" id="1.20.5.170:FF:000022">
    <property type="entry name" value="Tripartite motif containing 55"/>
    <property type="match status" value="1"/>
</dbReference>
<dbReference type="FunFam" id="3.30.160.60:FF:000140">
    <property type="entry name" value="Tripartite motif containing 55"/>
    <property type="match status" value="1"/>
</dbReference>
<dbReference type="Gene3D" id="1.20.5.170">
    <property type="match status" value="1"/>
</dbReference>
<dbReference type="Gene3D" id="3.30.160.60">
    <property type="entry name" value="Classic Zinc Finger"/>
    <property type="match status" value="1"/>
</dbReference>
<dbReference type="Gene3D" id="3.30.40.10">
    <property type="entry name" value="Zinc/RING finger domain, C3HC4 (zinc finger)"/>
    <property type="match status" value="1"/>
</dbReference>
<dbReference type="InterPro" id="IPR017903">
    <property type="entry name" value="COS_domain"/>
</dbReference>
<dbReference type="InterPro" id="IPR050617">
    <property type="entry name" value="E3_ligase_FN3/SPRY"/>
</dbReference>
<dbReference type="InterPro" id="IPR027370">
    <property type="entry name" value="Znf-RING_euk"/>
</dbReference>
<dbReference type="InterPro" id="IPR000315">
    <property type="entry name" value="Znf_B-box"/>
</dbReference>
<dbReference type="InterPro" id="IPR001841">
    <property type="entry name" value="Znf_RING"/>
</dbReference>
<dbReference type="InterPro" id="IPR013083">
    <property type="entry name" value="Znf_RING/FYVE/PHD"/>
</dbReference>
<dbReference type="InterPro" id="IPR017907">
    <property type="entry name" value="Znf_RING_CS"/>
</dbReference>
<dbReference type="PANTHER" id="PTHR24099">
    <property type="entry name" value="E3 UBIQUITIN-PROTEIN LIGASE TRIM36-RELATED"/>
    <property type="match status" value="1"/>
</dbReference>
<dbReference type="PANTHER" id="PTHR24099:SF17">
    <property type="entry name" value="TRIPARTITE MOTIF CONTAINING 55"/>
    <property type="match status" value="1"/>
</dbReference>
<dbReference type="Pfam" id="PF00643">
    <property type="entry name" value="zf-B_box"/>
    <property type="match status" value="1"/>
</dbReference>
<dbReference type="Pfam" id="PF13445">
    <property type="entry name" value="zf-RING_UBOX"/>
    <property type="match status" value="1"/>
</dbReference>
<dbReference type="SMART" id="SM00336">
    <property type="entry name" value="BBOX"/>
    <property type="match status" value="1"/>
</dbReference>
<dbReference type="SMART" id="SM00184">
    <property type="entry name" value="RING"/>
    <property type="match status" value="1"/>
</dbReference>
<dbReference type="SUPFAM" id="SSF57845">
    <property type="entry name" value="B-box zinc-binding domain"/>
    <property type="match status" value="1"/>
</dbReference>
<dbReference type="SUPFAM" id="SSF57850">
    <property type="entry name" value="RING/U-box"/>
    <property type="match status" value="1"/>
</dbReference>
<dbReference type="PROSITE" id="PS51262">
    <property type="entry name" value="COS"/>
    <property type="match status" value="1"/>
</dbReference>
<dbReference type="PROSITE" id="PS50119">
    <property type="entry name" value="ZF_BBOX"/>
    <property type="match status" value="1"/>
</dbReference>
<dbReference type="PROSITE" id="PS00518">
    <property type="entry name" value="ZF_RING_1"/>
    <property type="match status" value="1"/>
</dbReference>
<dbReference type="PROSITE" id="PS50089">
    <property type="entry name" value="ZF_RING_2"/>
    <property type="match status" value="1"/>
</dbReference>
<proteinExistence type="evidence at protein level"/>
<reference key="1">
    <citation type="journal article" date="2009" name="PLoS Biol.">
        <title>Lineage-specific biology revealed by a finished genome assembly of the mouse.</title>
        <authorList>
            <person name="Church D.M."/>
            <person name="Goodstadt L."/>
            <person name="Hillier L.W."/>
            <person name="Zody M.C."/>
            <person name="Goldstein S."/>
            <person name="She X."/>
            <person name="Bult C.J."/>
            <person name="Agarwala R."/>
            <person name="Cherry J.L."/>
            <person name="DiCuccio M."/>
            <person name="Hlavina W."/>
            <person name="Kapustin Y."/>
            <person name="Meric P."/>
            <person name="Maglott D."/>
            <person name="Birtle Z."/>
            <person name="Marques A.C."/>
            <person name="Graves T."/>
            <person name="Zhou S."/>
            <person name="Teague B."/>
            <person name="Potamousis K."/>
            <person name="Churas C."/>
            <person name="Place M."/>
            <person name="Herschleb J."/>
            <person name="Runnheim R."/>
            <person name="Forrest D."/>
            <person name="Amos-Landgraf J."/>
            <person name="Schwartz D.C."/>
            <person name="Cheng Z."/>
            <person name="Lindblad-Toh K."/>
            <person name="Eichler E.E."/>
            <person name="Ponting C.P."/>
        </authorList>
    </citation>
    <scope>NUCLEOTIDE SEQUENCE [LARGE SCALE GENOMIC DNA]</scope>
    <source>
        <strain>C57BL/6J</strain>
    </source>
</reference>
<reference key="2">
    <citation type="journal article" date="2005" name="Science">
        <title>The transcriptional landscape of the mammalian genome.</title>
        <authorList>
            <person name="Carninci P."/>
            <person name="Kasukawa T."/>
            <person name="Katayama S."/>
            <person name="Gough J."/>
            <person name="Frith M.C."/>
            <person name="Maeda N."/>
            <person name="Oyama R."/>
            <person name="Ravasi T."/>
            <person name="Lenhard B."/>
            <person name="Wells C."/>
            <person name="Kodzius R."/>
            <person name="Shimokawa K."/>
            <person name="Bajic V.B."/>
            <person name="Brenner S.E."/>
            <person name="Batalov S."/>
            <person name="Forrest A.R."/>
            <person name="Zavolan M."/>
            <person name="Davis M.J."/>
            <person name="Wilming L.G."/>
            <person name="Aidinis V."/>
            <person name="Allen J.E."/>
            <person name="Ambesi-Impiombato A."/>
            <person name="Apweiler R."/>
            <person name="Aturaliya R.N."/>
            <person name="Bailey T.L."/>
            <person name="Bansal M."/>
            <person name="Baxter L."/>
            <person name="Beisel K.W."/>
            <person name="Bersano T."/>
            <person name="Bono H."/>
            <person name="Chalk A.M."/>
            <person name="Chiu K.P."/>
            <person name="Choudhary V."/>
            <person name="Christoffels A."/>
            <person name="Clutterbuck D.R."/>
            <person name="Crowe M.L."/>
            <person name="Dalla E."/>
            <person name="Dalrymple B.P."/>
            <person name="de Bono B."/>
            <person name="Della Gatta G."/>
            <person name="di Bernardo D."/>
            <person name="Down T."/>
            <person name="Engstrom P."/>
            <person name="Fagiolini M."/>
            <person name="Faulkner G."/>
            <person name="Fletcher C.F."/>
            <person name="Fukushima T."/>
            <person name="Furuno M."/>
            <person name="Futaki S."/>
            <person name="Gariboldi M."/>
            <person name="Georgii-Hemming P."/>
            <person name="Gingeras T.R."/>
            <person name="Gojobori T."/>
            <person name="Green R.E."/>
            <person name="Gustincich S."/>
            <person name="Harbers M."/>
            <person name="Hayashi Y."/>
            <person name="Hensch T.K."/>
            <person name="Hirokawa N."/>
            <person name="Hill D."/>
            <person name="Huminiecki L."/>
            <person name="Iacono M."/>
            <person name="Ikeo K."/>
            <person name="Iwama A."/>
            <person name="Ishikawa T."/>
            <person name="Jakt M."/>
            <person name="Kanapin A."/>
            <person name="Katoh M."/>
            <person name="Kawasawa Y."/>
            <person name="Kelso J."/>
            <person name="Kitamura H."/>
            <person name="Kitano H."/>
            <person name="Kollias G."/>
            <person name="Krishnan S.P."/>
            <person name="Kruger A."/>
            <person name="Kummerfeld S.K."/>
            <person name="Kurochkin I.V."/>
            <person name="Lareau L.F."/>
            <person name="Lazarevic D."/>
            <person name="Lipovich L."/>
            <person name="Liu J."/>
            <person name="Liuni S."/>
            <person name="McWilliam S."/>
            <person name="Madan Babu M."/>
            <person name="Madera M."/>
            <person name="Marchionni L."/>
            <person name="Matsuda H."/>
            <person name="Matsuzawa S."/>
            <person name="Miki H."/>
            <person name="Mignone F."/>
            <person name="Miyake S."/>
            <person name="Morris K."/>
            <person name="Mottagui-Tabar S."/>
            <person name="Mulder N."/>
            <person name="Nakano N."/>
            <person name="Nakauchi H."/>
            <person name="Ng P."/>
            <person name="Nilsson R."/>
            <person name="Nishiguchi S."/>
            <person name="Nishikawa S."/>
            <person name="Nori F."/>
            <person name="Ohara O."/>
            <person name="Okazaki Y."/>
            <person name="Orlando V."/>
            <person name="Pang K.C."/>
            <person name="Pavan W.J."/>
            <person name="Pavesi G."/>
            <person name="Pesole G."/>
            <person name="Petrovsky N."/>
            <person name="Piazza S."/>
            <person name="Reed J."/>
            <person name="Reid J.F."/>
            <person name="Ring B.Z."/>
            <person name="Ringwald M."/>
            <person name="Rost B."/>
            <person name="Ruan Y."/>
            <person name="Salzberg S.L."/>
            <person name="Sandelin A."/>
            <person name="Schneider C."/>
            <person name="Schoenbach C."/>
            <person name="Sekiguchi K."/>
            <person name="Semple C.A."/>
            <person name="Seno S."/>
            <person name="Sessa L."/>
            <person name="Sheng Y."/>
            <person name="Shibata Y."/>
            <person name="Shimada H."/>
            <person name="Shimada K."/>
            <person name="Silva D."/>
            <person name="Sinclair B."/>
            <person name="Sperling S."/>
            <person name="Stupka E."/>
            <person name="Sugiura K."/>
            <person name="Sultana R."/>
            <person name="Takenaka Y."/>
            <person name="Taki K."/>
            <person name="Tammoja K."/>
            <person name="Tan S.L."/>
            <person name="Tang S."/>
            <person name="Taylor M.S."/>
            <person name="Tegner J."/>
            <person name="Teichmann S.A."/>
            <person name="Ueda H.R."/>
            <person name="van Nimwegen E."/>
            <person name="Verardo R."/>
            <person name="Wei C.L."/>
            <person name="Yagi K."/>
            <person name="Yamanishi H."/>
            <person name="Zabarovsky E."/>
            <person name="Zhu S."/>
            <person name="Zimmer A."/>
            <person name="Hide W."/>
            <person name="Bult C."/>
            <person name="Grimmond S.M."/>
            <person name="Teasdale R.D."/>
            <person name="Liu E.T."/>
            <person name="Brusic V."/>
            <person name="Quackenbush J."/>
            <person name="Wahlestedt C."/>
            <person name="Mattick J.S."/>
            <person name="Hume D.A."/>
            <person name="Kai C."/>
            <person name="Sasaki D."/>
            <person name="Tomaru Y."/>
            <person name="Fukuda S."/>
            <person name="Kanamori-Katayama M."/>
            <person name="Suzuki M."/>
            <person name="Aoki J."/>
            <person name="Arakawa T."/>
            <person name="Iida J."/>
            <person name="Imamura K."/>
            <person name="Itoh M."/>
            <person name="Kato T."/>
            <person name="Kawaji H."/>
            <person name="Kawagashira N."/>
            <person name="Kawashima T."/>
            <person name="Kojima M."/>
            <person name="Kondo S."/>
            <person name="Konno H."/>
            <person name="Nakano K."/>
            <person name="Ninomiya N."/>
            <person name="Nishio T."/>
            <person name="Okada M."/>
            <person name="Plessy C."/>
            <person name="Shibata K."/>
            <person name="Shiraki T."/>
            <person name="Suzuki S."/>
            <person name="Tagami M."/>
            <person name="Waki K."/>
            <person name="Watahiki A."/>
            <person name="Okamura-Oho Y."/>
            <person name="Suzuki H."/>
            <person name="Kawai J."/>
            <person name="Hayashizaki Y."/>
        </authorList>
    </citation>
    <scope>NUCLEOTIDE SEQUENCE [LARGE SCALE MRNA] OF 1-197</scope>
    <source>
        <strain>C57BL/6J</strain>
        <tissue>Heart</tissue>
    </source>
</reference>
<reference evidence="10" key="3">
    <citation type="journal article" date="2010" name="Cell">
        <title>A tissue-specific atlas of mouse protein phosphorylation and expression.</title>
        <authorList>
            <person name="Huttlin E.L."/>
            <person name="Jedrychowski M.P."/>
            <person name="Elias J.E."/>
            <person name="Goswami T."/>
            <person name="Rad R."/>
            <person name="Beausoleil S.A."/>
            <person name="Villen J."/>
            <person name="Haas W."/>
            <person name="Sowa M.E."/>
            <person name="Gygi S.P."/>
        </authorList>
    </citation>
    <scope>IDENTIFICATION BY MASS SPECTROMETRY [LARGE SCALE ANALYSIS]</scope>
</reference>
<reference evidence="11" key="4">
    <citation type="journal article" date="2014" name="Mol. Cell. Proteomics">
        <title>Immunoaffinity enrichment and mass spectrometry analysis of protein methylation.</title>
        <authorList>
            <person name="Guo A."/>
            <person name="Gu H."/>
            <person name="Zhou J."/>
            <person name="Mulhern D."/>
            <person name="Wang Y."/>
            <person name="Lee K.A."/>
            <person name="Yang V."/>
            <person name="Aguiar M."/>
            <person name="Kornhauser J."/>
            <person name="Jia X."/>
            <person name="Ren J."/>
            <person name="Beausoleil S.A."/>
            <person name="Silva J.C."/>
            <person name="Vemulapalli V."/>
            <person name="Bedford M.T."/>
            <person name="Comb M.J."/>
        </authorList>
    </citation>
    <scope>IDENTIFICATION BY MASS SPECTROMETRY [LARGE SCALE ANALYSIS]</scope>
</reference>
<reference key="5">
    <citation type="journal article" date="2014" name="Cell Biochem. Funct.">
        <title>Muscle ring finger 1 and muscle ring finger 2 are necessary but functionally redundant during developmental cardiac growth and regulate E2F1-mediated gene expression in vivo.</title>
        <authorList>
            <person name="Willis M.S."/>
            <person name="Wadosky K.M."/>
            <person name="Rodriguez J.E."/>
            <person name="Schisler J.C."/>
            <person name="Lockyer P."/>
            <person name="Hilliard E.G."/>
            <person name="Glass D.J."/>
            <person name="Patterson C."/>
        </authorList>
    </citation>
    <scope>FUNCTION</scope>
    <scope>DISRUPTION PHENOTYPE</scope>
</reference>
<reference key="6">
    <citation type="journal article" date="2018" name="FEBS Open Bio">
        <title>The E3 ubiquitin ligase MuRF2 attenuates LPS-induced macrophage activation by inhibiting production of inflammatory cytokines and migration.</title>
        <authorList>
            <person name="Bian H."/>
            <person name="Gao S."/>
            <person name="Zhang D."/>
            <person name="Zhao Q."/>
            <person name="Li F."/>
            <person name="Li X."/>
            <person name="Sun S."/>
            <person name="Song S."/>
            <person name="Li T."/>
            <person name="Zhu Q."/>
            <person name="Ren W."/>
            <person name="Qin C."/>
            <person name="Qi J."/>
        </authorList>
    </citation>
    <scope>FUNCTION</scope>
    <scope>TISSUE SPECIFICITY</scope>
    <scope>INDUCTION</scope>
    <scope>SUBCELLULAR LOCATION</scope>
</reference>
<reference key="7">
    <citation type="journal article" date="2020" name="Aging (Albany NY)">
        <title>miR-378a-3p inhibits ischemia/reperfusion-induced apoptosis in H9C2 cardiomyocytes by targeting TRIM55 via the DUSP1-JNK1/2 signaling pathway.</title>
        <authorList>
            <person name="Tan J."/>
            <person name="Shen J."/>
            <person name="Zhu H."/>
            <person name="Gong Y."/>
            <person name="Zhu H."/>
            <person name="Li J."/>
            <person name="Lin S."/>
            <person name="Wu G."/>
            <person name="Sun T."/>
        </authorList>
    </citation>
    <scope>FUNCTION</scope>
</reference>
<reference key="8">
    <citation type="journal article" date="2023" name="Sci. Signal.">
        <title>TRIM55 promotes noncanonical NF-kappaB signaling and B cell-mediated immune responses by coordinating p100 ubiquitination and processing.</title>
        <authorList>
            <person name="Lin L."/>
            <person name="Yu H."/>
            <person name="Li L."/>
            <person name="Yang W."/>
            <person name="Chen X."/>
            <person name="Gong Y."/>
            <person name="Lei Q."/>
            <person name="Li Z."/>
            <person name="Zhou Z."/>
            <person name="Dai L."/>
            <person name="Zhang H."/>
            <person name="Hu H."/>
        </authorList>
    </citation>
    <scope>FUNCTION</scope>
    <scope>DISRUPTION PHENOTYPE</scope>
</reference>
<name>TRI55_MOUSE</name>
<feature type="chain" id="PRO_0000459627" description="Tripartite motif-containing 55">
    <location>
        <begin position="1"/>
        <end position="545"/>
    </location>
</feature>
<feature type="domain" description="COS" evidence="4">
    <location>
        <begin position="269"/>
        <end position="327"/>
    </location>
</feature>
<feature type="zinc finger region" description="RING-type" evidence="3">
    <location>
        <begin position="26"/>
        <end position="82"/>
    </location>
</feature>
<feature type="zinc finger region" description="B box-type" evidence="2">
    <location>
        <begin position="119"/>
        <end position="161"/>
    </location>
</feature>
<feature type="region of interest" description="Disordered" evidence="5">
    <location>
        <begin position="324"/>
        <end position="352"/>
    </location>
</feature>
<feature type="region of interest" description="Disordered" evidence="5">
    <location>
        <begin position="359"/>
        <end position="378"/>
    </location>
</feature>
<feature type="region of interest" description="Disordered" evidence="5">
    <location>
        <begin position="417"/>
        <end position="532"/>
    </location>
</feature>
<feature type="compositionally biased region" description="Acidic residues" evidence="5">
    <location>
        <begin position="328"/>
        <end position="352"/>
    </location>
</feature>
<feature type="compositionally biased region" description="Polar residues" evidence="5">
    <location>
        <begin position="417"/>
        <end position="428"/>
    </location>
</feature>
<feature type="compositionally biased region" description="Low complexity" evidence="5">
    <location>
        <begin position="474"/>
        <end position="485"/>
    </location>
</feature>
<feature type="compositionally biased region" description="Polar residues" evidence="5">
    <location>
        <begin position="486"/>
        <end position="506"/>
    </location>
</feature>
<feature type="binding site" evidence="2">
    <location>
        <position position="124"/>
    </location>
    <ligand>
        <name>Zn(2+)</name>
        <dbReference type="ChEBI" id="CHEBI:29105"/>
    </ligand>
</feature>
<feature type="binding site" evidence="2">
    <location>
        <position position="127"/>
    </location>
    <ligand>
        <name>Zn(2+)</name>
        <dbReference type="ChEBI" id="CHEBI:29105"/>
    </ligand>
</feature>
<feature type="binding site" evidence="2">
    <location>
        <position position="147"/>
    </location>
    <ligand>
        <name>Zn(2+)</name>
        <dbReference type="ChEBI" id="CHEBI:29105"/>
    </ligand>
</feature>
<feature type="binding site" evidence="2">
    <location>
        <position position="153"/>
    </location>
    <ligand>
        <name>Zn(2+)</name>
        <dbReference type="ChEBI" id="CHEBI:29105"/>
    </ligand>
</feature>
<comment type="function">
    <text evidence="1 6 7 8 9">E3 ubiquitin ligase that plays an important role in regulating cardiac development and contractility, muscle growth, metabolism, and fiber-type differentiation. Acts as a critical factor that regulates cardiomyocyte size during development in concert with TRIM63 by regulating E2F1-mediated gene expression (PubMed:23512667). Plays a role in apoptosis induction in cardiomyocytes by promoting ubiquitination of the DUSP1 phosphatase (PubMed:32463795). Promotes non-canonical NF-kappa-B signaling and B-cell-mediated immune responses by mediating NFKB2 'Lys-48'-linked ubiquitination and processing. In turn, NFKB2 is further processed by valosin-containing protein/VCP, an ATPase that mediates ubiquitin-dependent protein degradation by the proteasome (PubMed:37816088). May play a role in preventing macrophages from producing inflammatory factors and migrating by downregulating the level of nuclear NF-kappa-B subunit RELA (PubMed:29435413). Modifies also PPARG via polyubiquitination and accelerates PPARG proteasomal degradation to inhibit its activity (By similarity).</text>
</comment>
<comment type="catalytic activity">
    <reaction evidence="1">
        <text>S-ubiquitinyl-[E2 ubiquitin-conjugating enzyme]-L-cysteine + [acceptor protein]-L-lysine = [E2 ubiquitin-conjugating enzyme]-L-cysteine + N(6)-ubiquitinyl-[acceptor protein]-L-lysine.</text>
        <dbReference type="EC" id="2.3.2.27"/>
    </reaction>
</comment>
<comment type="subcellular location">
    <subcellularLocation>
        <location evidence="7">Nucleus</location>
    </subcellularLocation>
    <subcellularLocation>
        <location evidence="7">Cytoplasm</location>
    </subcellularLocation>
    <text evidence="7">TLR4 signaling pathway promotes nuclear translocation.</text>
</comment>
<comment type="tissue specificity">
    <text evidence="7">Widely expressed in various tissues, besides skeletal muscle and heart, such as brain, lung, liver, spleen and kidney.</text>
</comment>
<comment type="induction">
    <text evidence="7">Expression is inhibited by the LPS/TLR4 pathway.</text>
</comment>
<comment type="PTM">
    <text evidence="1">Targeted for degradation through the proteasomal and lysosomal pathways in the presence of SUMO3.</text>
</comment>
<comment type="disruption phenotype">
    <text evidence="6 9">TRIM55 deficiency does not affect B-cell development in the bone marrow and the transitional stages in the spleen. However, mutant mice display an impaired germinal center formation and antibody production. Moreover, TRIM55 deficiency suppresses the activation of B-cells in response to various stimuli such as anti-CD40 or BAFF (PubMed:37816088). The double deletion TRIM63 and TRIM55 mice die in utero and peri-natally and exhibit a spontaneous cardiac hypertrophy from birth (PubMed:23512667). Mechanistically, hearts have decreased E2F1 occupancy at promoter regions of multiple E2F1-regulated genes compared to WT (PubMed:23512667).</text>
</comment>
<gene>
    <name type="primary">Trim55</name>
</gene>